<organism>
    <name type="scientific">Albidiferax ferrireducens (strain ATCC BAA-621 / DSM 15236 / T118)</name>
    <name type="common">Rhodoferax ferrireducens</name>
    <dbReference type="NCBI Taxonomy" id="338969"/>
    <lineage>
        <taxon>Bacteria</taxon>
        <taxon>Pseudomonadati</taxon>
        <taxon>Pseudomonadota</taxon>
        <taxon>Betaproteobacteria</taxon>
        <taxon>Burkholderiales</taxon>
        <taxon>Comamonadaceae</taxon>
        <taxon>Rhodoferax</taxon>
    </lineage>
</organism>
<name>SYFA_ALBFT</name>
<reference key="1">
    <citation type="submission" date="2006-02" db="EMBL/GenBank/DDBJ databases">
        <title>Complete sequence of chromosome of Rhodoferax ferrireducens DSM 15236.</title>
        <authorList>
            <person name="Copeland A."/>
            <person name="Lucas S."/>
            <person name="Lapidus A."/>
            <person name="Barry K."/>
            <person name="Detter J.C."/>
            <person name="Glavina del Rio T."/>
            <person name="Hammon N."/>
            <person name="Israni S."/>
            <person name="Pitluck S."/>
            <person name="Brettin T."/>
            <person name="Bruce D."/>
            <person name="Han C."/>
            <person name="Tapia R."/>
            <person name="Gilna P."/>
            <person name="Kiss H."/>
            <person name="Schmutz J."/>
            <person name="Larimer F."/>
            <person name="Land M."/>
            <person name="Kyrpides N."/>
            <person name="Ivanova N."/>
            <person name="Richardson P."/>
        </authorList>
    </citation>
    <scope>NUCLEOTIDE SEQUENCE [LARGE SCALE GENOMIC DNA]</scope>
    <source>
        <strain>ATCC BAA-621 / DSM 15236 / T118</strain>
    </source>
</reference>
<sequence length="357" mass="39586">MNELNSVVDSAKAAFEQARTPADLENAKALFLGKSGRITELMKGMAALAVDEKKTRGAAINLAKQAIEVALNNRRQALADAELQAQLQAEALDVTLPGRQRGQGSLHPVSLTLERIEAIFGSMGFDVAQGPEIESDWFNFTALNTPEDHPARSMHDTFYVEGGTATAPNLLRTHSSPMQIRYAVQHVKRHRAAVGVGQVEGLFSGDMPEIRVIAPGRTYRVDSDATHSPMFHQCEGLWVGENVSFKDLKFVFTDFCRTFFESDDLVLRFRPSFFPFTEPSAEIDIQFQSGPLAGRWLEVAGSGQVHPNVIRNMGLEPEKYIGFAFGMGPDRLAMLRYGVNDLRLFFDGDVRFLSQFQ</sequence>
<gene>
    <name evidence="1" type="primary">pheS</name>
    <name type="ordered locus">Rfer_1340</name>
</gene>
<feature type="chain" id="PRO_1000059244" description="Phenylalanine--tRNA ligase alpha subunit">
    <location>
        <begin position="1"/>
        <end position="357"/>
    </location>
</feature>
<feature type="binding site" evidence="1">
    <location>
        <position position="278"/>
    </location>
    <ligand>
        <name>Mg(2+)</name>
        <dbReference type="ChEBI" id="CHEBI:18420"/>
        <note>shared with beta subunit</note>
    </ligand>
</feature>
<proteinExistence type="inferred from homology"/>
<dbReference type="EC" id="6.1.1.20" evidence="1"/>
<dbReference type="EMBL" id="CP000267">
    <property type="protein sequence ID" value="ABD69074.1"/>
    <property type="molecule type" value="Genomic_DNA"/>
</dbReference>
<dbReference type="RefSeq" id="WP_011463642.1">
    <property type="nucleotide sequence ID" value="NC_007908.1"/>
</dbReference>
<dbReference type="SMR" id="Q21YS9"/>
<dbReference type="STRING" id="338969.Rfer_1340"/>
<dbReference type="KEGG" id="rfr:Rfer_1340"/>
<dbReference type="eggNOG" id="COG0016">
    <property type="taxonomic scope" value="Bacteria"/>
</dbReference>
<dbReference type="HOGENOM" id="CLU_025086_0_1_4"/>
<dbReference type="OrthoDB" id="9800719at2"/>
<dbReference type="Proteomes" id="UP000008332">
    <property type="component" value="Chromosome"/>
</dbReference>
<dbReference type="GO" id="GO:0005737">
    <property type="term" value="C:cytoplasm"/>
    <property type="evidence" value="ECO:0007669"/>
    <property type="project" value="UniProtKB-SubCell"/>
</dbReference>
<dbReference type="GO" id="GO:0005524">
    <property type="term" value="F:ATP binding"/>
    <property type="evidence" value="ECO:0007669"/>
    <property type="project" value="UniProtKB-UniRule"/>
</dbReference>
<dbReference type="GO" id="GO:0000287">
    <property type="term" value="F:magnesium ion binding"/>
    <property type="evidence" value="ECO:0007669"/>
    <property type="project" value="UniProtKB-UniRule"/>
</dbReference>
<dbReference type="GO" id="GO:0004826">
    <property type="term" value="F:phenylalanine-tRNA ligase activity"/>
    <property type="evidence" value="ECO:0007669"/>
    <property type="project" value="UniProtKB-UniRule"/>
</dbReference>
<dbReference type="GO" id="GO:0000049">
    <property type="term" value="F:tRNA binding"/>
    <property type="evidence" value="ECO:0007669"/>
    <property type="project" value="InterPro"/>
</dbReference>
<dbReference type="GO" id="GO:0006432">
    <property type="term" value="P:phenylalanyl-tRNA aminoacylation"/>
    <property type="evidence" value="ECO:0007669"/>
    <property type="project" value="UniProtKB-UniRule"/>
</dbReference>
<dbReference type="CDD" id="cd00496">
    <property type="entry name" value="PheRS_alpha_core"/>
    <property type="match status" value="1"/>
</dbReference>
<dbReference type="Gene3D" id="3.30.930.10">
    <property type="entry name" value="Bira Bifunctional Protein, Domain 2"/>
    <property type="match status" value="1"/>
</dbReference>
<dbReference type="HAMAP" id="MF_00281">
    <property type="entry name" value="Phe_tRNA_synth_alpha1"/>
    <property type="match status" value="1"/>
</dbReference>
<dbReference type="InterPro" id="IPR006195">
    <property type="entry name" value="aa-tRNA-synth_II"/>
</dbReference>
<dbReference type="InterPro" id="IPR045864">
    <property type="entry name" value="aa-tRNA-synth_II/BPL/LPL"/>
</dbReference>
<dbReference type="InterPro" id="IPR004529">
    <property type="entry name" value="Phe-tRNA-synth_IIc_asu"/>
</dbReference>
<dbReference type="InterPro" id="IPR004188">
    <property type="entry name" value="Phe-tRNA_ligase_II_N"/>
</dbReference>
<dbReference type="InterPro" id="IPR022911">
    <property type="entry name" value="Phe_tRNA_ligase_alpha1_bac"/>
</dbReference>
<dbReference type="InterPro" id="IPR002319">
    <property type="entry name" value="Phenylalanyl-tRNA_Synthase"/>
</dbReference>
<dbReference type="InterPro" id="IPR010978">
    <property type="entry name" value="tRNA-bd_arm"/>
</dbReference>
<dbReference type="NCBIfam" id="TIGR00468">
    <property type="entry name" value="pheS"/>
    <property type="match status" value="1"/>
</dbReference>
<dbReference type="PANTHER" id="PTHR11538:SF41">
    <property type="entry name" value="PHENYLALANINE--TRNA LIGASE, MITOCHONDRIAL"/>
    <property type="match status" value="1"/>
</dbReference>
<dbReference type="PANTHER" id="PTHR11538">
    <property type="entry name" value="PHENYLALANYL-TRNA SYNTHETASE"/>
    <property type="match status" value="1"/>
</dbReference>
<dbReference type="Pfam" id="PF02912">
    <property type="entry name" value="Phe_tRNA-synt_N"/>
    <property type="match status" value="1"/>
</dbReference>
<dbReference type="Pfam" id="PF01409">
    <property type="entry name" value="tRNA-synt_2d"/>
    <property type="match status" value="1"/>
</dbReference>
<dbReference type="SUPFAM" id="SSF55681">
    <property type="entry name" value="Class II aaRS and biotin synthetases"/>
    <property type="match status" value="1"/>
</dbReference>
<dbReference type="SUPFAM" id="SSF46589">
    <property type="entry name" value="tRNA-binding arm"/>
    <property type="match status" value="1"/>
</dbReference>
<dbReference type="PROSITE" id="PS50862">
    <property type="entry name" value="AA_TRNA_LIGASE_II"/>
    <property type="match status" value="1"/>
</dbReference>
<accession>Q21YS9</accession>
<evidence type="ECO:0000255" key="1">
    <source>
        <dbReference type="HAMAP-Rule" id="MF_00281"/>
    </source>
</evidence>
<comment type="catalytic activity">
    <reaction evidence="1">
        <text>tRNA(Phe) + L-phenylalanine + ATP = L-phenylalanyl-tRNA(Phe) + AMP + diphosphate + H(+)</text>
        <dbReference type="Rhea" id="RHEA:19413"/>
        <dbReference type="Rhea" id="RHEA-COMP:9668"/>
        <dbReference type="Rhea" id="RHEA-COMP:9699"/>
        <dbReference type="ChEBI" id="CHEBI:15378"/>
        <dbReference type="ChEBI" id="CHEBI:30616"/>
        <dbReference type="ChEBI" id="CHEBI:33019"/>
        <dbReference type="ChEBI" id="CHEBI:58095"/>
        <dbReference type="ChEBI" id="CHEBI:78442"/>
        <dbReference type="ChEBI" id="CHEBI:78531"/>
        <dbReference type="ChEBI" id="CHEBI:456215"/>
        <dbReference type="EC" id="6.1.1.20"/>
    </reaction>
</comment>
<comment type="cofactor">
    <cofactor evidence="1">
        <name>Mg(2+)</name>
        <dbReference type="ChEBI" id="CHEBI:18420"/>
    </cofactor>
    <text evidence="1">Binds 2 magnesium ions per tetramer.</text>
</comment>
<comment type="subunit">
    <text evidence="1">Tetramer of two alpha and two beta subunits.</text>
</comment>
<comment type="subcellular location">
    <subcellularLocation>
        <location evidence="1">Cytoplasm</location>
    </subcellularLocation>
</comment>
<comment type="similarity">
    <text evidence="1">Belongs to the class-II aminoacyl-tRNA synthetase family. Phe-tRNA synthetase alpha subunit type 1 subfamily.</text>
</comment>
<keyword id="KW-0030">Aminoacyl-tRNA synthetase</keyword>
<keyword id="KW-0067">ATP-binding</keyword>
<keyword id="KW-0963">Cytoplasm</keyword>
<keyword id="KW-0436">Ligase</keyword>
<keyword id="KW-0460">Magnesium</keyword>
<keyword id="KW-0479">Metal-binding</keyword>
<keyword id="KW-0547">Nucleotide-binding</keyword>
<keyword id="KW-0648">Protein biosynthesis</keyword>
<keyword id="KW-1185">Reference proteome</keyword>
<protein>
    <recommendedName>
        <fullName evidence="1">Phenylalanine--tRNA ligase alpha subunit</fullName>
        <ecNumber evidence="1">6.1.1.20</ecNumber>
    </recommendedName>
    <alternativeName>
        <fullName evidence="1">Phenylalanyl-tRNA synthetase alpha subunit</fullName>
        <shortName evidence="1">PheRS</shortName>
    </alternativeName>
</protein>